<feature type="chain" id="PRO_0000154509" description="Anthranilate phosphoribosyltransferase">
    <location>
        <begin position="1"/>
        <end position="336"/>
    </location>
</feature>
<feature type="binding site" evidence="1">
    <location>
        <position position="78"/>
    </location>
    <ligand>
        <name>5-phospho-alpha-D-ribose 1-diphosphate</name>
        <dbReference type="ChEBI" id="CHEBI:58017"/>
    </ligand>
</feature>
<feature type="binding site" evidence="1">
    <location>
        <position position="78"/>
    </location>
    <ligand>
        <name>anthranilate</name>
        <dbReference type="ChEBI" id="CHEBI:16567"/>
        <label>1</label>
    </ligand>
</feature>
<feature type="binding site" evidence="1">
    <location>
        <begin position="81"/>
        <end position="82"/>
    </location>
    <ligand>
        <name>5-phospho-alpha-D-ribose 1-diphosphate</name>
        <dbReference type="ChEBI" id="CHEBI:58017"/>
    </ligand>
</feature>
<feature type="binding site" evidence="1">
    <location>
        <position position="86"/>
    </location>
    <ligand>
        <name>5-phospho-alpha-D-ribose 1-diphosphate</name>
        <dbReference type="ChEBI" id="CHEBI:58017"/>
    </ligand>
</feature>
<feature type="binding site" evidence="1">
    <location>
        <begin position="88"/>
        <end position="91"/>
    </location>
    <ligand>
        <name>5-phospho-alpha-D-ribose 1-diphosphate</name>
        <dbReference type="ChEBI" id="CHEBI:58017"/>
    </ligand>
</feature>
<feature type="binding site" evidence="1">
    <location>
        <position position="90"/>
    </location>
    <ligand>
        <name>Mg(2+)</name>
        <dbReference type="ChEBI" id="CHEBI:18420"/>
        <label>1</label>
    </ligand>
</feature>
<feature type="binding site" evidence="1">
    <location>
        <begin position="106"/>
        <end position="114"/>
    </location>
    <ligand>
        <name>5-phospho-alpha-D-ribose 1-diphosphate</name>
        <dbReference type="ChEBI" id="CHEBI:58017"/>
    </ligand>
</feature>
<feature type="binding site" evidence="1">
    <location>
        <position position="109"/>
    </location>
    <ligand>
        <name>anthranilate</name>
        <dbReference type="ChEBI" id="CHEBI:16567"/>
        <label>1</label>
    </ligand>
</feature>
<feature type="binding site" evidence="1">
    <location>
        <position position="118"/>
    </location>
    <ligand>
        <name>5-phospho-alpha-D-ribose 1-diphosphate</name>
        <dbReference type="ChEBI" id="CHEBI:58017"/>
    </ligand>
</feature>
<feature type="binding site" evidence="1">
    <location>
        <position position="164"/>
    </location>
    <ligand>
        <name>anthranilate</name>
        <dbReference type="ChEBI" id="CHEBI:16567"/>
        <label>2</label>
    </ligand>
</feature>
<feature type="binding site" evidence="1">
    <location>
        <position position="222"/>
    </location>
    <ligand>
        <name>Mg(2+)</name>
        <dbReference type="ChEBI" id="CHEBI:18420"/>
        <label>2</label>
    </ligand>
</feature>
<feature type="binding site" evidence="1">
    <location>
        <position position="223"/>
    </location>
    <ligand>
        <name>Mg(2+)</name>
        <dbReference type="ChEBI" id="CHEBI:18420"/>
        <label>1</label>
    </ligand>
</feature>
<feature type="binding site" evidence="1">
    <location>
        <position position="223"/>
    </location>
    <ligand>
        <name>Mg(2+)</name>
        <dbReference type="ChEBI" id="CHEBI:18420"/>
        <label>2</label>
    </ligand>
</feature>
<name>TRPD_HALSA</name>
<protein>
    <recommendedName>
        <fullName evidence="1">Anthranilate phosphoribosyltransferase</fullName>
        <ecNumber evidence="1">2.4.2.18</ecNumber>
    </recommendedName>
</protein>
<evidence type="ECO:0000255" key="1">
    <source>
        <dbReference type="HAMAP-Rule" id="MF_00211"/>
    </source>
</evidence>
<proteinExistence type="inferred from homology"/>
<dbReference type="EC" id="2.4.2.18" evidence="1"/>
<dbReference type="EMBL" id="AE004437">
    <property type="protein sequence ID" value="AAG19904.1"/>
    <property type="molecule type" value="Genomic_DNA"/>
</dbReference>
<dbReference type="PIR" id="D84317">
    <property type="entry name" value="D84317"/>
</dbReference>
<dbReference type="RefSeq" id="WP_010903202.1">
    <property type="nucleotide sequence ID" value="NC_002607.1"/>
</dbReference>
<dbReference type="SMR" id="Q9HPG3"/>
<dbReference type="FunCoup" id="Q9HPG3">
    <property type="interactions" value="93"/>
</dbReference>
<dbReference type="STRING" id="64091.VNG_1649G"/>
<dbReference type="PaxDb" id="64091-VNG_1649G"/>
<dbReference type="GeneID" id="89349905"/>
<dbReference type="KEGG" id="hal:VNG_1649G"/>
<dbReference type="PATRIC" id="fig|64091.14.peg.1257"/>
<dbReference type="HOGENOM" id="CLU_034315_2_1_2"/>
<dbReference type="InParanoid" id="Q9HPG3"/>
<dbReference type="OrthoDB" id="8214at2157"/>
<dbReference type="PhylomeDB" id="Q9HPG3"/>
<dbReference type="UniPathway" id="UPA00035">
    <property type="reaction ID" value="UER00041"/>
</dbReference>
<dbReference type="Proteomes" id="UP000000554">
    <property type="component" value="Chromosome"/>
</dbReference>
<dbReference type="GO" id="GO:0005829">
    <property type="term" value="C:cytosol"/>
    <property type="evidence" value="ECO:0000318"/>
    <property type="project" value="GO_Central"/>
</dbReference>
<dbReference type="GO" id="GO:0004048">
    <property type="term" value="F:anthranilate phosphoribosyltransferase activity"/>
    <property type="evidence" value="ECO:0007669"/>
    <property type="project" value="UniProtKB-UniRule"/>
</dbReference>
<dbReference type="GO" id="GO:0000287">
    <property type="term" value="F:magnesium ion binding"/>
    <property type="evidence" value="ECO:0007669"/>
    <property type="project" value="UniProtKB-UniRule"/>
</dbReference>
<dbReference type="GO" id="GO:0000162">
    <property type="term" value="P:L-tryptophan biosynthetic process"/>
    <property type="evidence" value="ECO:0000318"/>
    <property type="project" value="GO_Central"/>
</dbReference>
<dbReference type="FunFam" id="1.20.970.10:FF:000024">
    <property type="entry name" value="Anthranilate phosphoribosyltransferase"/>
    <property type="match status" value="1"/>
</dbReference>
<dbReference type="FunFam" id="3.40.1030.10:FF:000002">
    <property type="entry name" value="Anthranilate phosphoribosyltransferase"/>
    <property type="match status" value="1"/>
</dbReference>
<dbReference type="Gene3D" id="3.40.1030.10">
    <property type="entry name" value="Nucleoside phosphorylase/phosphoribosyltransferase catalytic domain"/>
    <property type="match status" value="1"/>
</dbReference>
<dbReference type="Gene3D" id="1.20.970.10">
    <property type="entry name" value="Transferase, Pyrimidine Nucleoside Phosphorylase, Chain C"/>
    <property type="match status" value="1"/>
</dbReference>
<dbReference type="HAMAP" id="MF_00211">
    <property type="entry name" value="TrpD"/>
    <property type="match status" value="1"/>
</dbReference>
<dbReference type="InterPro" id="IPR005940">
    <property type="entry name" value="Anthranilate_Pribosyl_Tfrase"/>
</dbReference>
<dbReference type="InterPro" id="IPR000312">
    <property type="entry name" value="Glycosyl_Trfase_fam3"/>
</dbReference>
<dbReference type="InterPro" id="IPR017459">
    <property type="entry name" value="Glycosyl_Trfase_fam3_N_dom"/>
</dbReference>
<dbReference type="InterPro" id="IPR036320">
    <property type="entry name" value="Glycosyl_Trfase_fam3_N_dom_sf"/>
</dbReference>
<dbReference type="InterPro" id="IPR035902">
    <property type="entry name" value="Nuc_phospho_transferase"/>
</dbReference>
<dbReference type="NCBIfam" id="TIGR01245">
    <property type="entry name" value="trpD"/>
    <property type="match status" value="1"/>
</dbReference>
<dbReference type="PANTHER" id="PTHR43285">
    <property type="entry name" value="ANTHRANILATE PHOSPHORIBOSYLTRANSFERASE"/>
    <property type="match status" value="1"/>
</dbReference>
<dbReference type="PANTHER" id="PTHR43285:SF2">
    <property type="entry name" value="ANTHRANILATE PHOSPHORIBOSYLTRANSFERASE"/>
    <property type="match status" value="1"/>
</dbReference>
<dbReference type="Pfam" id="PF02885">
    <property type="entry name" value="Glycos_trans_3N"/>
    <property type="match status" value="1"/>
</dbReference>
<dbReference type="Pfam" id="PF00591">
    <property type="entry name" value="Glycos_transf_3"/>
    <property type="match status" value="1"/>
</dbReference>
<dbReference type="SUPFAM" id="SSF52418">
    <property type="entry name" value="Nucleoside phosphorylase/phosphoribosyltransferase catalytic domain"/>
    <property type="match status" value="1"/>
</dbReference>
<dbReference type="SUPFAM" id="SSF47648">
    <property type="entry name" value="Nucleoside phosphorylase/phosphoribosyltransferase N-terminal domain"/>
    <property type="match status" value="1"/>
</dbReference>
<sequence length="336" mass="33514">MQEYIERVAAGEDLSLDAARDAVTTLFEDATDAEIGALLGALRAKGETEAEIAGFAQGMRDAAITVAPDCTPLVDTCGTGGDDYDTINVSTTAALVAAGAGIPTAKHGNYSVSSASGSSDVLDALGVELATDPAAVEARIETDGIGYMHAPAFHPGMEAVIGPRRDLGVRTIFNLLGPLTNPARADAQVVGVYDPALVPVLARALSRMAVDRALVVHGAGLDEFALHGDSTVAEVDGDTVTTTTVSPSTFGLAEAPIDAVAGGGPEANAADLRGIVTGELTGPKRDIVVANAGAAIYVGGGADSLAAGADRAAAAIDSGAAADTLAALTDAHAVQQ</sequence>
<reference key="1">
    <citation type="journal article" date="2000" name="Proc. Natl. Acad. Sci. U.S.A.">
        <title>Genome sequence of Halobacterium species NRC-1.</title>
        <authorList>
            <person name="Ng W.V."/>
            <person name="Kennedy S.P."/>
            <person name="Mahairas G.G."/>
            <person name="Berquist B."/>
            <person name="Pan M."/>
            <person name="Shukla H.D."/>
            <person name="Lasky S.R."/>
            <person name="Baliga N.S."/>
            <person name="Thorsson V."/>
            <person name="Sbrogna J."/>
            <person name="Swartzell S."/>
            <person name="Weir D."/>
            <person name="Hall J."/>
            <person name="Dahl T.A."/>
            <person name="Welti R."/>
            <person name="Goo Y.A."/>
            <person name="Leithauser B."/>
            <person name="Keller K."/>
            <person name="Cruz R."/>
            <person name="Danson M.J."/>
            <person name="Hough D.W."/>
            <person name="Maddocks D.G."/>
            <person name="Jablonski P.E."/>
            <person name="Krebs M.P."/>
            <person name="Angevine C.M."/>
            <person name="Dale H."/>
            <person name="Isenbarger T.A."/>
            <person name="Peck R.F."/>
            <person name="Pohlschroder M."/>
            <person name="Spudich J.L."/>
            <person name="Jung K.-H."/>
            <person name="Alam M."/>
            <person name="Freitas T."/>
            <person name="Hou S."/>
            <person name="Daniels C.J."/>
            <person name="Dennis P.P."/>
            <person name="Omer A.D."/>
            <person name="Ebhardt H."/>
            <person name="Lowe T.M."/>
            <person name="Liang P."/>
            <person name="Riley M."/>
            <person name="Hood L."/>
            <person name="DasSarma S."/>
        </authorList>
    </citation>
    <scope>NUCLEOTIDE SEQUENCE [LARGE SCALE GENOMIC DNA]</scope>
    <source>
        <strain>ATCC 700922 / JCM 11081 / NRC-1</strain>
    </source>
</reference>
<gene>
    <name evidence="1" type="primary">trpD</name>
    <name type="synonym">trpD1</name>
    <name type="ordered locus">VNG_1649G</name>
</gene>
<comment type="function">
    <text evidence="1">Catalyzes the transfer of the phosphoribosyl group of 5-phosphorylribose-1-pyrophosphate (PRPP) to anthranilate to yield N-(5'-phosphoribosyl)-anthranilate (PRA).</text>
</comment>
<comment type="catalytic activity">
    <reaction evidence="1">
        <text>N-(5-phospho-beta-D-ribosyl)anthranilate + diphosphate = 5-phospho-alpha-D-ribose 1-diphosphate + anthranilate</text>
        <dbReference type="Rhea" id="RHEA:11768"/>
        <dbReference type="ChEBI" id="CHEBI:16567"/>
        <dbReference type="ChEBI" id="CHEBI:18277"/>
        <dbReference type="ChEBI" id="CHEBI:33019"/>
        <dbReference type="ChEBI" id="CHEBI:58017"/>
        <dbReference type="EC" id="2.4.2.18"/>
    </reaction>
</comment>
<comment type="cofactor">
    <cofactor evidence="1">
        <name>Mg(2+)</name>
        <dbReference type="ChEBI" id="CHEBI:18420"/>
    </cofactor>
    <text evidence="1">Binds 2 magnesium ions per monomer.</text>
</comment>
<comment type="pathway">
    <text evidence="1">Amino-acid biosynthesis; L-tryptophan biosynthesis; L-tryptophan from chorismate: step 2/5.</text>
</comment>
<comment type="subunit">
    <text evidence="1">Homodimer.</text>
</comment>
<comment type="similarity">
    <text evidence="1">Belongs to the anthranilate phosphoribosyltransferase family.</text>
</comment>
<keyword id="KW-0028">Amino-acid biosynthesis</keyword>
<keyword id="KW-0057">Aromatic amino acid biosynthesis</keyword>
<keyword id="KW-0328">Glycosyltransferase</keyword>
<keyword id="KW-0460">Magnesium</keyword>
<keyword id="KW-0479">Metal-binding</keyword>
<keyword id="KW-1185">Reference proteome</keyword>
<keyword id="KW-0808">Transferase</keyword>
<keyword id="KW-0822">Tryptophan biosynthesis</keyword>
<organism>
    <name type="scientific">Halobacterium salinarum (strain ATCC 700922 / JCM 11081 / NRC-1)</name>
    <name type="common">Halobacterium halobium</name>
    <dbReference type="NCBI Taxonomy" id="64091"/>
    <lineage>
        <taxon>Archaea</taxon>
        <taxon>Methanobacteriati</taxon>
        <taxon>Methanobacteriota</taxon>
        <taxon>Stenosarchaea group</taxon>
        <taxon>Halobacteria</taxon>
        <taxon>Halobacteriales</taxon>
        <taxon>Halobacteriaceae</taxon>
        <taxon>Halobacterium</taxon>
        <taxon>Halobacterium salinarum NRC-34001</taxon>
    </lineage>
</organism>
<accession>Q9HPG3</accession>